<feature type="chain" id="PRO_0000188823" description="Putative 4-hydroxythreonine-4-phosphate dehydrogenase 2">
    <location>
        <begin position="1"/>
        <end position="348"/>
    </location>
</feature>
<feature type="binding site" evidence="1">
    <location>
        <position position="180"/>
    </location>
    <ligand>
        <name>a divalent metal cation</name>
        <dbReference type="ChEBI" id="CHEBI:60240"/>
        <note>ligand shared between dimeric partners</note>
    </ligand>
</feature>
<feature type="binding site" evidence="1">
    <location>
        <position position="224"/>
    </location>
    <ligand>
        <name>a divalent metal cation</name>
        <dbReference type="ChEBI" id="CHEBI:60240"/>
        <note>ligand shared between dimeric partners</note>
    </ligand>
</feature>
<feature type="binding site" evidence="1">
    <location>
        <position position="279"/>
    </location>
    <ligand>
        <name>a divalent metal cation</name>
        <dbReference type="ChEBI" id="CHEBI:60240"/>
        <note>ligand shared between dimeric partners</note>
    </ligand>
</feature>
<geneLocation type="plasmid">
    <name>pSymB</name>
    <name>megaplasmid 2</name>
</geneLocation>
<comment type="function">
    <text evidence="1">Catalyzes the NAD(P)-dependent oxidation of 4-(phosphooxy)-L-threonine (HTP) into 2-amino-3-oxo-4-(phosphooxy)butyric acid which spontaneously decarboxylates to form 3-amino-2-oxopropyl phosphate (AHAP).</text>
</comment>
<comment type="catalytic activity">
    <reaction evidence="1">
        <text>4-(phosphooxy)-L-threonine + NAD(+) = 3-amino-2-oxopropyl phosphate + CO2 + NADH</text>
        <dbReference type="Rhea" id="RHEA:32275"/>
        <dbReference type="ChEBI" id="CHEBI:16526"/>
        <dbReference type="ChEBI" id="CHEBI:57279"/>
        <dbReference type="ChEBI" id="CHEBI:57540"/>
        <dbReference type="ChEBI" id="CHEBI:57945"/>
        <dbReference type="ChEBI" id="CHEBI:58452"/>
        <dbReference type="EC" id="1.1.1.262"/>
    </reaction>
</comment>
<comment type="cofactor">
    <cofactor evidence="1">
        <name>Zn(2+)</name>
        <dbReference type="ChEBI" id="CHEBI:29105"/>
    </cofactor>
    <cofactor evidence="1">
        <name>Mg(2+)</name>
        <dbReference type="ChEBI" id="CHEBI:18420"/>
    </cofactor>
    <cofactor evidence="1">
        <name>Co(2+)</name>
        <dbReference type="ChEBI" id="CHEBI:48828"/>
    </cofactor>
    <text evidence="1">Binds 1 divalent metal cation per subunit. Can use ions such as Zn(2+), Mg(2+) or Co(2+).</text>
</comment>
<comment type="pathway">
    <text evidence="1">Cofactor biosynthesis; pyridoxine 5'-phosphate biosynthesis; pyridoxine 5'-phosphate from D-erythrose 4-phosphate: step 4/5.</text>
</comment>
<comment type="subunit">
    <text evidence="1">Homodimer.</text>
</comment>
<comment type="subcellular location">
    <subcellularLocation>
        <location evidence="1">Cytoplasm</location>
    </subcellularLocation>
</comment>
<comment type="miscellaneous">
    <text evidence="1">The active site is located at the dimer interface.</text>
</comment>
<comment type="similarity">
    <text evidence="2">Belongs to the PdxA family.</text>
</comment>
<organism>
    <name type="scientific">Rhizobium meliloti (strain 1021)</name>
    <name type="common">Ensifer meliloti</name>
    <name type="synonym">Sinorhizobium meliloti</name>
    <dbReference type="NCBI Taxonomy" id="266834"/>
    <lineage>
        <taxon>Bacteria</taxon>
        <taxon>Pseudomonadati</taxon>
        <taxon>Pseudomonadota</taxon>
        <taxon>Alphaproteobacteria</taxon>
        <taxon>Hyphomicrobiales</taxon>
        <taxon>Rhizobiaceae</taxon>
        <taxon>Sinorhizobium/Ensifer group</taxon>
        <taxon>Sinorhizobium</taxon>
    </lineage>
</organism>
<sequence>MTTSGADGTKERRPVIALAMGDPAGISPELTARLLALSDIRDAAHIIAIGDRRILDEGARVAGVTLDLEAASLDALDNAGTARHVFVDLAHLDPADVVRGEATLAGGTFATRNFRTALELAHAGKADAVCFTPFNKKAMRFAYPGYDDEIRFVADVLSFTGKVREFNVLEKVWNARVTSHIPLKDVASHLSVEAILAELKLTQACLKDAGYEEAKIAVAGLNPHAGDGGSFGMEEIDIIEPAVEKARALGFNVEGPFPADTVFLRALKEGFNAVMTMYHDQGQIAMKIIGFDKGVTMMGGLPFPLCTPAHGTAYDIAGKGIADIGATREAILLAARMAKKKRALSAAA</sequence>
<proteinExistence type="inferred from homology"/>
<accession>Q92TP3</accession>
<evidence type="ECO:0000250" key="1">
    <source>
        <dbReference type="UniProtKB" id="P19624"/>
    </source>
</evidence>
<evidence type="ECO:0000305" key="2"/>
<name>PDXAL_RHIME</name>
<keyword id="KW-0170">Cobalt</keyword>
<keyword id="KW-0963">Cytoplasm</keyword>
<keyword id="KW-0460">Magnesium</keyword>
<keyword id="KW-0479">Metal-binding</keyword>
<keyword id="KW-0520">NAD</keyword>
<keyword id="KW-0521">NADP</keyword>
<keyword id="KW-0560">Oxidoreductase</keyword>
<keyword id="KW-0614">Plasmid</keyword>
<keyword id="KW-0664">Pyridoxine biosynthesis</keyword>
<keyword id="KW-1185">Reference proteome</keyword>
<keyword id="KW-0862">Zinc</keyword>
<protein>
    <recommendedName>
        <fullName evidence="1">Putative 4-hydroxythreonine-4-phosphate dehydrogenase 2</fullName>
        <ecNumber evidence="1">1.1.1.262</ecNumber>
    </recommendedName>
    <alternativeName>
        <fullName evidence="1">4-(phosphohydroxy)-L-threonine dehydrogenase 2</fullName>
    </alternativeName>
</protein>
<dbReference type="EC" id="1.1.1.262" evidence="1"/>
<dbReference type="EMBL" id="AL591985">
    <property type="protein sequence ID" value="CAC49864.1"/>
    <property type="molecule type" value="Genomic_DNA"/>
</dbReference>
<dbReference type="PIR" id="H96024">
    <property type="entry name" value="H96024"/>
</dbReference>
<dbReference type="RefSeq" id="NP_438004.1">
    <property type="nucleotide sequence ID" value="NC_003078.1"/>
</dbReference>
<dbReference type="RefSeq" id="WP_010976261.1">
    <property type="nucleotide sequence ID" value="NC_003078.1"/>
</dbReference>
<dbReference type="SMR" id="Q92TP3"/>
<dbReference type="EnsemblBacteria" id="CAC49864">
    <property type="protein sequence ID" value="CAC49864"/>
    <property type="gene ID" value="SM_b20772"/>
</dbReference>
<dbReference type="KEGG" id="sme:SM_b20772"/>
<dbReference type="PATRIC" id="fig|266834.11.peg.6391"/>
<dbReference type="eggNOG" id="COG1995">
    <property type="taxonomic scope" value="Bacteria"/>
</dbReference>
<dbReference type="HOGENOM" id="CLU_040168_0_1_5"/>
<dbReference type="OrthoDB" id="9801783at2"/>
<dbReference type="UniPathway" id="UPA00244">
    <property type="reaction ID" value="UER00312"/>
</dbReference>
<dbReference type="PRO" id="PR:Q92TP3"/>
<dbReference type="Proteomes" id="UP000001976">
    <property type="component" value="Plasmid pSymB"/>
</dbReference>
<dbReference type="GO" id="GO:0005737">
    <property type="term" value="C:cytoplasm"/>
    <property type="evidence" value="ECO:0007669"/>
    <property type="project" value="UniProtKB-SubCell"/>
</dbReference>
<dbReference type="GO" id="GO:0050570">
    <property type="term" value="F:4-hydroxythreonine-4-phosphate dehydrogenase activity"/>
    <property type="evidence" value="ECO:0007669"/>
    <property type="project" value="UniProtKB-EC"/>
</dbReference>
<dbReference type="GO" id="GO:0046872">
    <property type="term" value="F:metal ion binding"/>
    <property type="evidence" value="ECO:0007669"/>
    <property type="project" value="UniProtKB-KW"/>
</dbReference>
<dbReference type="GO" id="GO:0051287">
    <property type="term" value="F:NAD binding"/>
    <property type="evidence" value="ECO:0007669"/>
    <property type="project" value="InterPro"/>
</dbReference>
<dbReference type="GO" id="GO:0008615">
    <property type="term" value="P:pyridoxine biosynthetic process"/>
    <property type="evidence" value="ECO:0007669"/>
    <property type="project" value="UniProtKB-KW"/>
</dbReference>
<dbReference type="Gene3D" id="3.40.718.10">
    <property type="entry name" value="Isopropylmalate Dehydrogenase"/>
    <property type="match status" value="1"/>
</dbReference>
<dbReference type="InterPro" id="IPR005255">
    <property type="entry name" value="PdxA_fam"/>
</dbReference>
<dbReference type="PANTHER" id="PTHR30004">
    <property type="entry name" value="4-HYDROXYTHREONINE-4-PHOSPHATE DEHYDROGENASE"/>
    <property type="match status" value="1"/>
</dbReference>
<dbReference type="PANTHER" id="PTHR30004:SF3">
    <property type="entry name" value="4-HYDROXYTHREONINE-4-PHOSPHATE DEHYDROGENASE 2-RELATED"/>
    <property type="match status" value="1"/>
</dbReference>
<dbReference type="Pfam" id="PF04166">
    <property type="entry name" value="PdxA"/>
    <property type="match status" value="1"/>
</dbReference>
<dbReference type="SUPFAM" id="SSF53659">
    <property type="entry name" value="Isocitrate/Isopropylmalate dehydrogenase-like"/>
    <property type="match status" value="1"/>
</dbReference>
<gene>
    <name type="ordered locus">RB1464</name>
    <name type="ORF">SMb20772</name>
</gene>
<reference key="1">
    <citation type="journal article" date="2001" name="Proc. Natl. Acad. Sci. U.S.A.">
        <title>The complete sequence of the 1,683-kb pSymB megaplasmid from the N2-fixing endosymbiont Sinorhizobium meliloti.</title>
        <authorList>
            <person name="Finan T.M."/>
            <person name="Weidner S."/>
            <person name="Wong K."/>
            <person name="Buhrmester J."/>
            <person name="Chain P."/>
            <person name="Vorhoelter F.J."/>
            <person name="Hernandez-Lucas I."/>
            <person name="Becker A."/>
            <person name="Cowie A."/>
            <person name="Gouzy J."/>
            <person name="Golding B."/>
            <person name="Puehler A."/>
        </authorList>
    </citation>
    <scope>NUCLEOTIDE SEQUENCE [LARGE SCALE GENOMIC DNA]</scope>
    <source>
        <strain>1021</strain>
    </source>
</reference>
<reference key="2">
    <citation type="journal article" date="2001" name="Science">
        <title>The composite genome of the legume symbiont Sinorhizobium meliloti.</title>
        <authorList>
            <person name="Galibert F."/>
            <person name="Finan T.M."/>
            <person name="Long S.R."/>
            <person name="Puehler A."/>
            <person name="Abola P."/>
            <person name="Ampe F."/>
            <person name="Barloy-Hubler F."/>
            <person name="Barnett M.J."/>
            <person name="Becker A."/>
            <person name="Boistard P."/>
            <person name="Bothe G."/>
            <person name="Boutry M."/>
            <person name="Bowser L."/>
            <person name="Buhrmester J."/>
            <person name="Cadieu E."/>
            <person name="Capela D."/>
            <person name="Chain P."/>
            <person name="Cowie A."/>
            <person name="Davis R.W."/>
            <person name="Dreano S."/>
            <person name="Federspiel N.A."/>
            <person name="Fisher R.F."/>
            <person name="Gloux S."/>
            <person name="Godrie T."/>
            <person name="Goffeau A."/>
            <person name="Golding B."/>
            <person name="Gouzy J."/>
            <person name="Gurjal M."/>
            <person name="Hernandez-Lucas I."/>
            <person name="Hong A."/>
            <person name="Huizar L."/>
            <person name="Hyman R.W."/>
            <person name="Jones T."/>
            <person name="Kahn D."/>
            <person name="Kahn M.L."/>
            <person name="Kalman S."/>
            <person name="Keating D.H."/>
            <person name="Kiss E."/>
            <person name="Komp C."/>
            <person name="Lelaure V."/>
            <person name="Masuy D."/>
            <person name="Palm C."/>
            <person name="Peck M.C."/>
            <person name="Pohl T.M."/>
            <person name="Portetelle D."/>
            <person name="Purnelle B."/>
            <person name="Ramsperger U."/>
            <person name="Surzycki R."/>
            <person name="Thebault P."/>
            <person name="Vandenbol M."/>
            <person name="Vorhoelter F.J."/>
            <person name="Weidner S."/>
            <person name="Wells D.H."/>
            <person name="Wong K."/>
            <person name="Yeh K.-C."/>
            <person name="Batut J."/>
        </authorList>
    </citation>
    <scope>NUCLEOTIDE SEQUENCE [LARGE SCALE GENOMIC DNA]</scope>
    <source>
        <strain>1021</strain>
    </source>
</reference>